<protein>
    <recommendedName>
        <fullName>Thioredoxin H1</fullName>
        <shortName>AtTrxh1</shortName>
    </recommendedName>
    <alternativeName>
        <fullName>Thioredoxin 1</fullName>
        <shortName>AtTRX1</shortName>
    </alternativeName>
</protein>
<feature type="initiator methionine" description="Removed" evidence="2">
    <location>
        <position position="1"/>
    </location>
</feature>
<feature type="chain" id="PRO_0000120046" description="Thioredoxin H1">
    <location>
        <begin position="2"/>
        <end position="114"/>
    </location>
</feature>
<feature type="domain" description="Thioredoxin" evidence="3">
    <location>
        <begin position="2"/>
        <end position="114"/>
    </location>
</feature>
<feature type="active site" description="Nucleophile" evidence="1">
    <location>
        <position position="40"/>
    </location>
</feature>
<feature type="active site" description="Nucleophile" evidence="1">
    <location>
        <position position="43"/>
    </location>
</feature>
<feature type="site" description="Deprotonates C-terminal active site Cys" evidence="1">
    <location>
        <position position="34"/>
    </location>
</feature>
<feature type="site" description="Contributes to redox potential value" evidence="1">
    <location>
        <position position="41"/>
    </location>
</feature>
<feature type="site" description="Contributes to redox potential value" evidence="1">
    <location>
        <position position="42"/>
    </location>
</feature>
<feature type="modified residue" description="N-acetylalanine" evidence="2">
    <location>
        <position position="2"/>
    </location>
</feature>
<feature type="disulfide bond" description="Redox-active" evidence="3 4">
    <location>
        <begin position="40"/>
        <end position="43"/>
    </location>
</feature>
<feature type="strand" evidence="9">
    <location>
        <begin position="9"/>
        <end position="13"/>
    </location>
</feature>
<feature type="helix" evidence="9">
    <location>
        <begin position="14"/>
        <end position="26"/>
    </location>
</feature>
<feature type="strand" evidence="9">
    <location>
        <begin position="30"/>
        <end position="36"/>
    </location>
</feature>
<feature type="helix" evidence="9">
    <location>
        <begin position="41"/>
        <end position="56"/>
    </location>
</feature>
<feature type="strand" evidence="9">
    <location>
        <begin position="58"/>
        <end position="66"/>
    </location>
</feature>
<feature type="turn" evidence="9">
    <location>
        <begin position="67"/>
        <end position="69"/>
    </location>
</feature>
<feature type="helix" evidence="9">
    <location>
        <begin position="71"/>
        <end position="76"/>
    </location>
</feature>
<feature type="strand" evidence="9">
    <location>
        <begin position="81"/>
        <end position="89"/>
    </location>
</feature>
<feature type="strand" evidence="9">
    <location>
        <begin position="92"/>
        <end position="99"/>
    </location>
</feature>
<feature type="helix" evidence="9">
    <location>
        <begin position="102"/>
        <end position="112"/>
    </location>
</feature>
<proteinExistence type="evidence at protein level"/>
<comment type="function">
    <text evidence="5">Thiol-disulfide oxidoreductase involved in the redox regulation of a number of cytosolic enzymes. Activates the cytosolic malate dehydrogenase (MDH) probably by reducing an interchain disulfide bond of the inactive MDH homodimer. Possesses insulin disulfide bonds reducing activity.</text>
</comment>
<comment type="subunit">
    <text evidence="6 7">Interacts with FBA6 (PubMed:21782461). Interacts with MDH1 (PubMed:29194485).</text>
</comment>
<comment type="interaction">
    <interactant intactId="EBI-8519814">
        <id>P29448</id>
    </interactant>
    <interactant intactId="EBI-25512418">
        <id>Q3E9D5</id>
        <label>SAMDC4</label>
    </interactant>
    <organismsDiffer>false</organismsDiffer>
    <experiments>3</experiments>
</comment>
<comment type="subcellular location">
    <subcellularLocation>
        <location evidence="1">Cytoplasm</location>
    </subcellularLocation>
</comment>
<comment type="similarity">
    <text evidence="8">Belongs to the thioredoxin family. Plant H-type subfamily.</text>
</comment>
<sequence>MASEEGQVIACHTVETWNEQLQKANESKTLVVVDFTASWCGPCRFIAPFFADLAKKLPNVLFLKVDTDELKSVASDWAIQAMPTFMFLKEGKILDKVVGAKKDELQSTIAKHLA</sequence>
<name>TRXH1_ARATH</name>
<organism>
    <name type="scientific">Arabidopsis thaliana</name>
    <name type="common">Mouse-ear cress</name>
    <dbReference type="NCBI Taxonomy" id="3702"/>
    <lineage>
        <taxon>Eukaryota</taxon>
        <taxon>Viridiplantae</taxon>
        <taxon>Streptophyta</taxon>
        <taxon>Embryophyta</taxon>
        <taxon>Tracheophyta</taxon>
        <taxon>Spermatophyta</taxon>
        <taxon>Magnoliopsida</taxon>
        <taxon>eudicotyledons</taxon>
        <taxon>Gunneridae</taxon>
        <taxon>Pentapetalae</taxon>
        <taxon>rosids</taxon>
        <taxon>malvids</taxon>
        <taxon>Brassicales</taxon>
        <taxon>Brassicaceae</taxon>
        <taxon>Camelineae</taxon>
        <taxon>Arabidopsis</taxon>
    </lineage>
</organism>
<gene>
    <name type="primary">TRX1</name>
    <name type="ordered locus">At3g51030</name>
    <name type="ORF">F24M12.70</name>
</gene>
<accession>P29448</accession>
<dbReference type="EMBL" id="Z14084">
    <property type="protein sequence ID" value="CAA78462.1"/>
    <property type="molecule type" value="mRNA"/>
</dbReference>
<dbReference type="EMBL" id="U35827">
    <property type="protein sequence ID" value="AAC49354.1"/>
    <property type="molecule type" value="Genomic_DNA"/>
</dbReference>
<dbReference type="EMBL" id="AL132980">
    <property type="protein sequence ID" value="CAB62625.1"/>
    <property type="molecule type" value="Genomic_DNA"/>
</dbReference>
<dbReference type="EMBL" id="CP002686">
    <property type="protein sequence ID" value="AEE78739.1"/>
    <property type="molecule type" value="Genomic_DNA"/>
</dbReference>
<dbReference type="EMBL" id="AY088687">
    <property type="protein sequence ID" value="AAM67008.1"/>
    <property type="molecule type" value="mRNA"/>
</dbReference>
<dbReference type="PIR" id="JQ2242">
    <property type="entry name" value="JQ2242"/>
</dbReference>
<dbReference type="RefSeq" id="NP_190672.1">
    <property type="nucleotide sequence ID" value="NM_114963.5"/>
</dbReference>
<dbReference type="PDB" id="1XFL">
    <property type="method" value="NMR"/>
    <property type="chains" value="A=1-114"/>
</dbReference>
<dbReference type="PDBsum" id="1XFL"/>
<dbReference type="BMRB" id="P29448"/>
<dbReference type="SMR" id="P29448"/>
<dbReference type="BioGRID" id="9585">
    <property type="interactions" value="1"/>
</dbReference>
<dbReference type="FunCoup" id="P29448">
    <property type="interactions" value="1160"/>
</dbReference>
<dbReference type="IntAct" id="P29448">
    <property type="interactions" value="46"/>
</dbReference>
<dbReference type="MINT" id="P29448"/>
<dbReference type="STRING" id="3702.P29448"/>
<dbReference type="PaxDb" id="3702-AT3G51030.1"/>
<dbReference type="ProteomicsDB" id="232420"/>
<dbReference type="DNASU" id="824267"/>
<dbReference type="EnsemblPlants" id="AT3G51030.1">
    <property type="protein sequence ID" value="AT3G51030.1"/>
    <property type="gene ID" value="AT3G51030"/>
</dbReference>
<dbReference type="GeneID" id="824267"/>
<dbReference type="Gramene" id="AT3G51030.1">
    <property type="protein sequence ID" value="AT3G51030.1"/>
    <property type="gene ID" value="AT3G51030"/>
</dbReference>
<dbReference type="KEGG" id="ath:AT3G51030"/>
<dbReference type="Araport" id="AT3G51030"/>
<dbReference type="TAIR" id="AT3G51030">
    <property type="gene designation" value="TRX1"/>
</dbReference>
<dbReference type="eggNOG" id="KOG0907">
    <property type="taxonomic scope" value="Eukaryota"/>
</dbReference>
<dbReference type="HOGENOM" id="CLU_090389_14_1_1"/>
<dbReference type="InParanoid" id="P29448"/>
<dbReference type="OMA" id="DFHALWC"/>
<dbReference type="OrthoDB" id="10263751at2759"/>
<dbReference type="PhylomeDB" id="P29448"/>
<dbReference type="EvolutionaryTrace" id="P29448"/>
<dbReference type="PRO" id="PR:P29448"/>
<dbReference type="Proteomes" id="UP000006548">
    <property type="component" value="Chromosome 3"/>
</dbReference>
<dbReference type="ExpressionAtlas" id="P29448">
    <property type="expression patterns" value="baseline and differential"/>
</dbReference>
<dbReference type="GO" id="GO:0005829">
    <property type="term" value="C:cytosol"/>
    <property type="evidence" value="ECO:0000304"/>
    <property type="project" value="TAIR"/>
</dbReference>
<dbReference type="GO" id="GO:0008047">
    <property type="term" value="F:enzyme activator activity"/>
    <property type="evidence" value="ECO:0000314"/>
    <property type="project" value="UniProtKB"/>
</dbReference>
<dbReference type="GO" id="GO:0016671">
    <property type="term" value="F:oxidoreductase activity, acting on a sulfur group of donors, disulfide as acceptor"/>
    <property type="evidence" value="ECO:0000314"/>
    <property type="project" value="TAIR"/>
</dbReference>
<dbReference type="GO" id="GO:0015035">
    <property type="term" value="F:protein-disulfide reductase activity"/>
    <property type="evidence" value="ECO:0007669"/>
    <property type="project" value="InterPro"/>
</dbReference>
<dbReference type="GO" id="GO:0043085">
    <property type="term" value="P:positive regulation of catalytic activity"/>
    <property type="evidence" value="ECO:0000314"/>
    <property type="project" value="UniProtKB"/>
</dbReference>
<dbReference type="CDD" id="cd02947">
    <property type="entry name" value="TRX_family"/>
    <property type="match status" value="1"/>
</dbReference>
<dbReference type="FunFam" id="3.40.30.10:FF:000104">
    <property type="entry name" value="Thioredoxin"/>
    <property type="match status" value="1"/>
</dbReference>
<dbReference type="Gene3D" id="3.40.30.10">
    <property type="entry name" value="Glutaredoxin"/>
    <property type="match status" value="1"/>
</dbReference>
<dbReference type="InterPro" id="IPR005746">
    <property type="entry name" value="Thioredoxin"/>
</dbReference>
<dbReference type="InterPro" id="IPR036249">
    <property type="entry name" value="Thioredoxin-like_sf"/>
</dbReference>
<dbReference type="InterPro" id="IPR017937">
    <property type="entry name" value="Thioredoxin_CS"/>
</dbReference>
<dbReference type="InterPro" id="IPR013766">
    <property type="entry name" value="Thioredoxin_domain"/>
</dbReference>
<dbReference type="InterPro" id="IPR050620">
    <property type="entry name" value="Thioredoxin_H-type-like"/>
</dbReference>
<dbReference type="PANTHER" id="PTHR10438">
    <property type="entry name" value="THIOREDOXIN"/>
    <property type="match status" value="1"/>
</dbReference>
<dbReference type="PANTHER" id="PTHR10438:SF425">
    <property type="entry name" value="THIOREDOXIN H1"/>
    <property type="match status" value="1"/>
</dbReference>
<dbReference type="Pfam" id="PF00085">
    <property type="entry name" value="Thioredoxin"/>
    <property type="match status" value="1"/>
</dbReference>
<dbReference type="PIRSF" id="PIRSF000077">
    <property type="entry name" value="Thioredoxin"/>
    <property type="match status" value="1"/>
</dbReference>
<dbReference type="PRINTS" id="PR00421">
    <property type="entry name" value="THIOREDOXIN"/>
</dbReference>
<dbReference type="SUPFAM" id="SSF52833">
    <property type="entry name" value="Thioredoxin-like"/>
    <property type="match status" value="1"/>
</dbReference>
<dbReference type="PROSITE" id="PS00194">
    <property type="entry name" value="THIOREDOXIN_1"/>
    <property type="match status" value="1"/>
</dbReference>
<dbReference type="PROSITE" id="PS51352">
    <property type="entry name" value="THIOREDOXIN_2"/>
    <property type="match status" value="1"/>
</dbReference>
<keyword id="KW-0002">3D-structure</keyword>
<keyword id="KW-0007">Acetylation</keyword>
<keyword id="KW-0963">Cytoplasm</keyword>
<keyword id="KW-1015">Disulfide bond</keyword>
<keyword id="KW-0249">Electron transport</keyword>
<keyword id="KW-0676">Redox-active center</keyword>
<keyword id="KW-1185">Reference proteome</keyword>
<keyword id="KW-0813">Transport</keyword>
<evidence type="ECO:0000250" key="1"/>
<evidence type="ECO:0000250" key="2">
    <source>
        <dbReference type="UniProtKB" id="Q42403"/>
    </source>
</evidence>
<evidence type="ECO:0000255" key="3">
    <source>
        <dbReference type="PROSITE-ProRule" id="PRU00691"/>
    </source>
</evidence>
<evidence type="ECO:0000269" key="4">
    <source>
    </source>
</evidence>
<evidence type="ECO:0000269" key="5">
    <source>
    </source>
</evidence>
<evidence type="ECO:0000269" key="6">
    <source>
    </source>
</evidence>
<evidence type="ECO:0000269" key="7">
    <source>
    </source>
</evidence>
<evidence type="ECO:0000305" key="8"/>
<evidence type="ECO:0007829" key="9">
    <source>
        <dbReference type="PDB" id="1XFL"/>
    </source>
</evidence>
<reference key="1">
    <citation type="journal article" date="1993" name="Plant Physiol.">
        <title>Nucleotide sequence of a cDNA clone encoding an Arabidopsis thaliana thioredoxin h.</title>
        <authorList>
            <person name="Rivera-Madrid R."/>
            <person name="Marinho P."/>
            <person name="Brugidou C."/>
            <person name="Chartier Y."/>
            <person name="Meyer Y."/>
        </authorList>
    </citation>
    <scope>NUCLEOTIDE SEQUENCE [MRNA]</scope>
</reference>
<reference key="2">
    <citation type="journal article" date="1996" name="J. Mol. Evol.">
        <title>Intron position as an evolutionary marker of thioredoxins and thioredoxin domains.</title>
        <authorList>
            <person name="Sahrawy M."/>
            <person name="Hecht V."/>
            <person name="Lopez Jaramillo J."/>
            <person name="Chueca A."/>
            <person name="Chartier Y."/>
            <person name="Meyer Y."/>
        </authorList>
    </citation>
    <scope>NUCLEOTIDE SEQUENCE [GENOMIC DNA]</scope>
    <source>
        <strain>cv. Landsberg erecta</strain>
    </source>
</reference>
<reference key="3">
    <citation type="journal article" date="2000" name="Nature">
        <title>Sequence and analysis of chromosome 3 of the plant Arabidopsis thaliana.</title>
        <authorList>
            <person name="Salanoubat M."/>
            <person name="Lemcke K."/>
            <person name="Rieger M."/>
            <person name="Ansorge W."/>
            <person name="Unseld M."/>
            <person name="Fartmann B."/>
            <person name="Valle G."/>
            <person name="Bloecker H."/>
            <person name="Perez-Alonso M."/>
            <person name="Obermaier B."/>
            <person name="Delseny M."/>
            <person name="Boutry M."/>
            <person name="Grivell L.A."/>
            <person name="Mache R."/>
            <person name="Puigdomenech P."/>
            <person name="De Simone V."/>
            <person name="Choisne N."/>
            <person name="Artiguenave F."/>
            <person name="Robert C."/>
            <person name="Brottier P."/>
            <person name="Wincker P."/>
            <person name="Cattolico L."/>
            <person name="Weissenbach J."/>
            <person name="Saurin W."/>
            <person name="Quetier F."/>
            <person name="Schaefer M."/>
            <person name="Mueller-Auer S."/>
            <person name="Gabel C."/>
            <person name="Fuchs M."/>
            <person name="Benes V."/>
            <person name="Wurmbach E."/>
            <person name="Drzonek H."/>
            <person name="Erfle H."/>
            <person name="Jordan N."/>
            <person name="Bangert S."/>
            <person name="Wiedelmann R."/>
            <person name="Kranz H."/>
            <person name="Voss H."/>
            <person name="Holland R."/>
            <person name="Brandt P."/>
            <person name="Nyakatura G."/>
            <person name="Vezzi A."/>
            <person name="D'Angelo M."/>
            <person name="Pallavicini A."/>
            <person name="Toppo S."/>
            <person name="Simionati B."/>
            <person name="Conrad A."/>
            <person name="Hornischer K."/>
            <person name="Kauer G."/>
            <person name="Loehnert T.-H."/>
            <person name="Nordsiek G."/>
            <person name="Reichelt J."/>
            <person name="Scharfe M."/>
            <person name="Schoen O."/>
            <person name="Bargues M."/>
            <person name="Terol J."/>
            <person name="Climent J."/>
            <person name="Navarro P."/>
            <person name="Collado C."/>
            <person name="Perez-Perez A."/>
            <person name="Ottenwaelder B."/>
            <person name="Duchemin D."/>
            <person name="Cooke R."/>
            <person name="Laudie M."/>
            <person name="Berger-Llauro C."/>
            <person name="Purnelle B."/>
            <person name="Masuy D."/>
            <person name="de Haan M."/>
            <person name="Maarse A.C."/>
            <person name="Alcaraz J.-P."/>
            <person name="Cottet A."/>
            <person name="Casacuberta E."/>
            <person name="Monfort A."/>
            <person name="Argiriou A."/>
            <person name="Flores M."/>
            <person name="Liguori R."/>
            <person name="Vitale D."/>
            <person name="Mannhaupt G."/>
            <person name="Haase D."/>
            <person name="Schoof H."/>
            <person name="Rudd S."/>
            <person name="Zaccaria P."/>
            <person name="Mewes H.-W."/>
            <person name="Mayer K.F.X."/>
            <person name="Kaul S."/>
            <person name="Town C.D."/>
            <person name="Koo H.L."/>
            <person name="Tallon L.J."/>
            <person name="Jenkins J."/>
            <person name="Rooney T."/>
            <person name="Rizzo M."/>
            <person name="Walts A."/>
            <person name="Utterback T."/>
            <person name="Fujii C.Y."/>
            <person name="Shea T.P."/>
            <person name="Creasy T.H."/>
            <person name="Haas B."/>
            <person name="Maiti R."/>
            <person name="Wu D."/>
            <person name="Peterson J."/>
            <person name="Van Aken S."/>
            <person name="Pai G."/>
            <person name="Militscher J."/>
            <person name="Sellers P."/>
            <person name="Gill J.E."/>
            <person name="Feldblyum T.V."/>
            <person name="Preuss D."/>
            <person name="Lin X."/>
            <person name="Nierman W.C."/>
            <person name="Salzberg S.L."/>
            <person name="White O."/>
            <person name="Venter J.C."/>
            <person name="Fraser C.M."/>
            <person name="Kaneko T."/>
            <person name="Nakamura Y."/>
            <person name="Sato S."/>
            <person name="Kato T."/>
            <person name="Asamizu E."/>
            <person name="Sasamoto S."/>
            <person name="Kimura T."/>
            <person name="Idesawa K."/>
            <person name="Kawashima K."/>
            <person name="Kishida Y."/>
            <person name="Kiyokawa C."/>
            <person name="Kohara M."/>
            <person name="Matsumoto M."/>
            <person name="Matsuno A."/>
            <person name="Muraki A."/>
            <person name="Nakayama S."/>
            <person name="Nakazaki N."/>
            <person name="Shinpo S."/>
            <person name="Takeuchi C."/>
            <person name="Wada T."/>
            <person name="Watanabe A."/>
            <person name="Yamada M."/>
            <person name="Yasuda M."/>
            <person name="Tabata S."/>
        </authorList>
    </citation>
    <scope>NUCLEOTIDE SEQUENCE [LARGE SCALE GENOMIC DNA]</scope>
    <source>
        <strain>cv. Columbia</strain>
    </source>
</reference>
<reference key="4">
    <citation type="journal article" date="2017" name="Plant J.">
        <title>Araport11: a complete reannotation of the Arabidopsis thaliana reference genome.</title>
        <authorList>
            <person name="Cheng C.Y."/>
            <person name="Krishnakumar V."/>
            <person name="Chan A.P."/>
            <person name="Thibaud-Nissen F."/>
            <person name="Schobel S."/>
            <person name="Town C.D."/>
        </authorList>
    </citation>
    <scope>GENOME REANNOTATION</scope>
    <source>
        <strain>cv. Columbia</strain>
    </source>
</reference>
<reference key="5">
    <citation type="submission" date="2002-03" db="EMBL/GenBank/DDBJ databases">
        <title>Full-length cDNA from Arabidopsis thaliana.</title>
        <authorList>
            <person name="Brover V.V."/>
            <person name="Troukhan M.E."/>
            <person name="Alexandrov N.A."/>
            <person name="Lu Y.-P."/>
            <person name="Flavell R.B."/>
            <person name="Feldmann K.A."/>
        </authorList>
    </citation>
    <scope>NUCLEOTIDE SEQUENCE [LARGE SCALE MRNA]</scope>
</reference>
<reference key="6">
    <citation type="journal article" date="2006" name="J. Biol. Chem.">
        <title>Thioredoxin-h1 reduces and reactivates the oxidized cytosolic malate dehydrogenase dimer in higher plants.</title>
        <authorList>
            <person name="Hara S."/>
            <person name="Motohashi K."/>
            <person name="Arisaka F."/>
            <person name="Romano P.G."/>
            <person name="Hosoya-Matsuda N."/>
            <person name="Kikuchi N."/>
            <person name="Fusada N."/>
            <person name="Hisabori T."/>
        </authorList>
    </citation>
    <scope>FUNCTION</scope>
</reference>
<reference key="7">
    <citation type="journal article" date="2009" name="Mol. Plant">
        <title>Comparative genomic study of the thioredoxin family in photosynthetic organisms with emphasis on Populus trichocarpa.</title>
        <authorList>
            <person name="Chibani K."/>
            <person name="Wingsle G."/>
            <person name="Jacquot J.P."/>
            <person name="Gelhaye E."/>
            <person name="Rouhier N."/>
        </authorList>
    </citation>
    <scope>GENE FAMILY</scope>
    <scope>NOMENCLATURE</scope>
</reference>
<reference key="8">
    <citation type="journal article" date="2011" name="Plant Physiol. Biochem.">
        <title>Regulation of plant cytosolic aldolase functions by redox-modifications.</title>
        <authorList>
            <person name="van der Linde K."/>
            <person name="Gutsche N."/>
            <person name="Leffers H.M."/>
            <person name="Lindermayr C."/>
            <person name="Mueller B."/>
            <person name="Holtgrefe S."/>
            <person name="Scheibe R."/>
        </authorList>
    </citation>
    <scope>INTERACTION WITH FBA6</scope>
</reference>
<reference key="9">
    <citation type="journal article" date="2005" name="Protein Sci.">
        <title>Solution structure of thioredoxin h1 from Arabidopsis thaliana.</title>
        <authorList>
            <person name="Peterson F.C."/>
            <person name="Lytle B.L."/>
            <person name="Sampath S."/>
            <person name="Vinarov D."/>
            <person name="Tyler E."/>
            <person name="Shahan M."/>
            <person name="Markley J.L."/>
            <person name="Volkman B.F."/>
        </authorList>
    </citation>
    <scope>STRUCTURE BY NMR</scope>
    <scope>DISULFIDE BOND</scope>
</reference>
<reference key="10">
    <citation type="journal article" date="2018" name="J. Exp. Bot.">
        <title>Self-protection of cytosolic malate dehydrogenase against oxidative stress in Arabidopsis.</title>
        <authorList>
            <person name="Huang J."/>
            <person name="Niazi A.K."/>
            <person name="Young D."/>
            <person name="Rosado L.A."/>
            <person name="Vertommen D."/>
            <person name="Bodra N."/>
            <person name="Abdelgawwad M.R."/>
            <person name="Vignols F."/>
            <person name="Wei B."/>
            <person name="Wahni K."/>
            <person name="Bashandy T."/>
            <person name="Bariat L."/>
            <person name="Van Breusegem F."/>
            <person name="Messens J."/>
            <person name="Reichheld J.P."/>
        </authorList>
    </citation>
    <scope>INTERACTION WITH MDH1</scope>
</reference>